<proteinExistence type="inferred from homology"/>
<dbReference type="EC" id="1.6.5.2" evidence="1"/>
<dbReference type="EMBL" id="AE005674">
    <property type="protein sequence ID" value="AAN44833.2"/>
    <property type="molecule type" value="Genomic_DNA"/>
</dbReference>
<dbReference type="EMBL" id="AE014073">
    <property type="protein sequence ID" value="AAP19345.1"/>
    <property type="molecule type" value="Genomic_DNA"/>
</dbReference>
<dbReference type="RefSeq" id="WP_001445921.1">
    <property type="nucleotide sequence ID" value="NZ_WPGW01000003.1"/>
</dbReference>
<dbReference type="SMR" id="Q83PX9"/>
<dbReference type="STRING" id="198214.SF3370"/>
<dbReference type="PaxDb" id="198214-SF3370"/>
<dbReference type="GeneID" id="93778646"/>
<dbReference type="KEGG" id="sfl:SF3370"/>
<dbReference type="KEGG" id="sfx:S4393"/>
<dbReference type="PATRIC" id="fig|198214.7.peg.3980"/>
<dbReference type="HOGENOM" id="CLU_058643_0_1_6"/>
<dbReference type="Proteomes" id="UP000001006">
    <property type="component" value="Chromosome"/>
</dbReference>
<dbReference type="Proteomes" id="UP000002673">
    <property type="component" value="Chromosome"/>
</dbReference>
<dbReference type="GO" id="GO:0005886">
    <property type="term" value="C:plasma membrane"/>
    <property type="evidence" value="ECO:0007669"/>
    <property type="project" value="UniProtKB-SubCell"/>
</dbReference>
<dbReference type="GO" id="GO:0009055">
    <property type="term" value="F:electron transfer activity"/>
    <property type="evidence" value="ECO:0007669"/>
    <property type="project" value="TreeGrafter"/>
</dbReference>
<dbReference type="GO" id="GO:0010181">
    <property type="term" value="F:FMN binding"/>
    <property type="evidence" value="ECO:0007669"/>
    <property type="project" value="TreeGrafter"/>
</dbReference>
<dbReference type="GO" id="GO:0050136">
    <property type="term" value="F:NADH:ubiquinone reductase (non-electrogenic) activity"/>
    <property type="evidence" value="ECO:0007669"/>
    <property type="project" value="RHEA"/>
</dbReference>
<dbReference type="GO" id="GO:0008753">
    <property type="term" value="F:NADPH dehydrogenase (quinone) activity"/>
    <property type="evidence" value="ECO:0007669"/>
    <property type="project" value="RHEA"/>
</dbReference>
<dbReference type="GO" id="GO:1901381">
    <property type="term" value="P:positive regulation of potassium ion transmembrane transport"/>
    <property type="evidence" value="ECO:0007669"/>
    <property type="project" value="UniProtKB-UniRule"/>
</dbReference>
<dbReference type="GO" id="GO:0006813">
    <property type="term" value="P:potassium ion transport"/>
    <property type="evidence" value="ECO:0007669"/>
    <property type="project" value="InterPro"/>
</dbReference>
<dbReference type="FunFam" id="3.40.50.360:FF:000013">
    <property type="entry name" value="Glutathione-regulated potassium-efflux system ancillary protein KefG"/>
    <property type="match status" value="1"/>
</dbReference>
<dbReference type="Gene3D" id="3.40.50.360">
    <property type="match status" value="1"/>
</dbReference>
<dbReference type="HAMAP" id="MF_01415">
    <property type="entry name" value="K_H_efflux_KefG"/>
    <property type="match status" value="1"/>
</dbReference>
<dbReference type="InterPro" id="IPR003680">
    <property type="entry name" value="Flavodoxin_fold"/>
</dbReference>
<dbReference type="InterPro" id="IPR029039">
    <property type="entry name" value="Flavoprotein-like_sf"/>
</dbReference>
<dbReference type="InterPro" id="IPR023947">
    <property type="entry name" value="K_H_efflux_KefG"/>
</dbReference>
<dbReference type="InterPro" id="IPR046980">
    <property type="entry name" value="KefG/KefF"/>
</dbReference>
<dbReference type="NCBIfam" id="NF003430">
    <property type="entry name" value="PRK04930.1"/>
    <property type="match status" value="1"/>
</dbReference>
<dbReference type="PANTHER" id="PTHR47307">
    <property type="entry name" value="GLUTATHIONE-REGULATED POTASSIUM-EFFLUX SYSTEM ANCILLARY PROTEIN KEFG"/>
    <property type="match status" value="1"/>
</dbReference>
<dbReference type="PANTHER" id="PTHR47307:SF1">
    <property type="entry name" value="GLUTATHIONE-REGULATED POTASSIUM-EFFLUX SYSTEM ANCILLARY PROTEIN KEFG"/>
    <property type="match status" value="1"/>
</dbReference>
<dbReference type="Pfam" id="PF02525">
    <property type="entry name" value="Flavodoxin_2"/>
    <property type="match status" value="1"/>
</dbReference>
<dbReference type="SUPFAM" id="SSF52218">
    <property type="entry name" value="Flavoproteins"/>
    <property type="match status" value="1"/>
</dbReference>
<comment type="function">
    <text evidence="1">Regulatory subunit of a potassium efflux system that confers protection against electrophiles. Required for full activity of KefB.</text>
</comment>
<comment type="catalytic activity">
    <reaction evidence="1">
        <text>a quinone + NADH + H(+) = a quinol + NAD(+)</text>
        <dbReference type="Rhea" id="RHEA:46160"/>
        <dbReference type="ChEBI" id="CHEBI:15378"/>
        <dbReference type="ChEBI" id="CHEBI:24646"/>
        <dbReference type="ChEBI" id="CHEBI:57540"/>
        <dbReference type="ChEBI" id="CHEBI:57945"/>
        <dbReference type="ChEBI" id="CHEBI:132124"/>
        <dbReference type="EC" id="1.6.5.2"/>
    </reaction>
</comment>
<comment type="catalytic activity">
    <reaction evidence="1">
        <text>a quinone + NADPH + H(+) = a quinol + NADP(+)</text>
        <dbReference type="Rhea" id="RHEA:46164"/>
        <dbReference type="ChEBI" id="CHEBI:15378"/>
        <dbReference type="ChEBI" id="CHEBI:24646"/>
        <dbReference type="ChEBI" id="CHEBI:57783"/>
        <dbReference type="ChEBI" id="CHEBI:58349"/>
        <dbReference type="ChEBI" id="CHEBI:132124"/>
        <dbReference type="EC" id="1.6.5.2"/>
    </reaction>
</comment>
<comment type="subunit">
    <text evidence="1">Interacts with KefB.</text>
</comment>
<comment type="subcellular location">
    <subcellularLocation>
        <location evidence="1">Cell inner membrane</location>
        <topology evidence="1">Peripheral membrane protein</topology>
        <orientation evidence="1">Cytoplasmic side</orientation>
    </subcellularLocation>
</comment>
<comment type="similarity">
    <text evidence="1">Belongs to the NAD(P)H dehydrogenase (quinone) family. KefG subfamily.</text>
</comment>
<gene>
    <name evidence="1" type="primary">kefG</name>
    <name type="ordered locus">SF3370</name>
    <name type="ordered locus">S4393</name>
</gene>
<name>KEFG_SHIFL</name>
<keyword id="KW-0997">Cell inner membrane</keyword>
<keyword id="KW-1003">Cell membrane</keyword>
<keyword id="KW-0472">Membrane</keyword>
<keyword id="KW-0520">NAD</keyword>
<keyword id="KW-0560">Oxidoreductase</keyword>
<keyword id="KW-1185">Reference proteome</keyword>
<feature type="chain" id="PRO_0000071649" description="Glutathione-regulated potassium-efflux system ancillary protein KefG">
    <location>
        <begin position="1"/>
        <end position="183"/>
    </location>
</feature>
<accession>Q83PX9</accession>
<reference key="1">
    <citation type="journal article" date="2002" name="Nucleic Acids Res.">
        <title>Genome sequence of Shigella flexneri 2a: insights into pathogenicity through comparison with genomes of Escherichia coli K12 and O157.</title>
        <authorList>
            <person name="Jin Q."/>
            <person name="Yuan Z."/>
            <person name="Xu J."/>
            <person name="Wang Y."/>
            <person name="Shen Y."/>
            <person name="Lu W."/>
            <person name="Wang J."/>
            <person name="Liu H."/>
            <person name="Yang J."/>
            <person name="Yang F."/>
            <person name="Zhang X."/>
            <person name="Zhang J."/>
            <person name="Yang G."/>
            <person name="Wu H."/>
            <person name="Qu D."/>
            <person name="Dong J."/>
            <person name="Sun L."/>
            <person name="Xue Y."/>
            <person name="Zhao A."/>
            <person name="Gao Y."/>
            <person name="Zhu J."/>
            <person name="Kan B."/>
            <person name="Ding K."/>
            <person name="Chen S."/>
            <person name="Cheng H."/>
            <person name="Yao Z."/>
            <person name="He B."/>
            <person name="Chen R."/>
            <person name="Ma D."/>
            <person name="Qiang B."/>
            <person name="Wen Y."/>
            <person name="Hou Y."/>
            <person name="Yu J."/>
        </authorList>
    </citation>
    <scope>NUCLEOTIDE SEQUENCE [LARGE SCALE GENOMIC DNA]</scope>
    <source>
        <strain>301 / Serotype 2a</strain>
    </source>
</reference>
<reference key="2">
    <citation type="journal article" date="2003" name="Infect. Immun.">
        <title>Complete genome sequence and comparative genomics of Shigella flexneri serotype 2a strain 2457T.</title>
        <authorList>
            <person name="Wei J."/>
            <person name="Goldberg M.B."/>
            <person name="Burland V."/>
            <person name="Venkatesan M.M."/>
            <person name="Deng W."/>
            <person name="Fournier G."/>
            <person name="Mayhew G.F."/>
            <person name="Plunkett G. III"/>
            <person name="Rose D.J."/>
            <person name="Darling A."/>
            <person name="Mau B."/>
            <person name="Perna N.T."/>
            <person name="Payne S.M."/>
            <person name="Runyen-Janecky L.J."/>
            <person name="Zhou S."/>
            <person name="Schwartz D.C."/>
            <person name="Blattner F.R."/>
        </authorList>
    </citation>
    <scope>NUCLEOTIDE SEQUENCE [LARGE SCALE GENOMIC DNA]</scope>
    <source>
        <strain>ATCC 700930 / 2457T / Serotype 2a</strain>
    </source>
</reference>
<evidence type="ECO:0000255" key="1">
    <source>
        <dbReference type="HAMAP-Rule" id="MF_01415"/>
    </source>
</evidence>
<sequence>MSQPAKVLLLYAHPESQDSVANRVLLKPATQLSNVTVHDLYAHYPDFFIDIPREQALLREHEVIVFQHPLYTYSCPALLKEWLDRVLSRGFASGPGGNQLAGKYWRNVITTGEPESAYRYDALNRYPMSDVLRPFELAAGMCRMHWLSPIIIYWARRQSAKELASHARAYGDWLANPLSPGGR</sequence>
<protein>
    <recommendedName>
        <fullName evidence="1">Glutathione-regulated potassium-efflux system ancillary protein KefG</fullName>
    </recommendedName>
    <alternativeName>
        <fullName evidence="1">Putative quinone oxidoreductase KefG</fullName>
        <ecNumber evidence="1">1.6.5.2</ecNumber>
    </alternativeName>
</protein>
<organism>
    <name type="scientific">Shigella flexneri</name>
    <dbReference type="NCBI Taxonomy" id="623"/>
    <lineage>
        <taxon>Bacteria</taxon>
        <taxon>Pseudomonadati</taxon>
        <taxon>Pseudomonadota</taxon>
        <taxon>Gammaproteobacteria</taxon>
        <taxon>Enterobacterales</taxon>
        <taxon>Enterobacteriaceae</taxon>
        <taxon>Shigella</taxon>
    </lineage>
</organism>